<protein>
    <recommendedName>
        <fullName evidence="1">NADH-quinone oxidoreductase subunit H 2</fullName>
        <ecNumber evidence="1">7.1.1.-</ecNumber>
    </recommendedName>
    <alternativeName>
        <fullName evidence="1">NADH dehydrogenase I subunit H 2</fullName>
    </alternativeName>
    <alternativeName>
        <fullName evidence="1">NDH-1 subunit H 2</fullName>
    </alternativeName>
</protein>
<sequence length="340" mass="37869">MNKWPRIMELIVAFGLIVFKVALLIAILLLLPLPLTWLERKIAGHMQQRMGPMRVGWHGLLQPVADGIKLLTKEDHIPAEADRFLFKLAPILALAPPFVVFVAIPFGETISVRGTEITLYLSNMNVALLFVFAVIGIEVFGVIFGGWAANSKYAVLGSLRTCAQMISYEIPMGFAVIGVVMLAQSMSLLDIVRAQTDVWNIVYQPVGFFVFFVAGLAEAQRIPFDLAEAEGDLGAGFHTEYSGIRFAFFMVSEYVIVLLVSVLLVILFFGGWNGILVPMPPLLWFLLKVAFFVYLFIWFRFTFPRYRYDQLMAIGWKVLLPLSMANIIITGVLLGAAAAP</sequence>
<gene>
    <name evidence="1" type="primary">nuoH2</name>
    <name type="ordered locus">RHE_CH03745</name>
</gene>
<organism>
    <name type="scientific">Rhizobium etli (strain ATCC 51251 / DSM 11541 / JCM 21823 / NBRC 15573 / CFN 42)</name>
    <dbReference type="NCBI Taxonomy" id="347834"/>
    <lineage>
        <taxon>Bacteria</taxon>
        <taxon>Pseudomonadati</taxon>
        <taxon>Pseudomonadota</taxon>
        <taxon>Alphaproteobacteria</taxon>
        <taxon>Hyphomicrobiales</taxon>
        <taxon>Rhizobiaceae</taxon>
        <taxon>Rhizobium/Agrobacterium group</taxon>
        <taxon>Rhizobium</taxon>
    </lineage>
</organism>
<evidence type="ECO:0000255" key="1">
    <source>
        <dbReference type="HAMAP-Rule" id="MF_01350"/>
    </source>
</evidence>
<feature type="chain" id="PRO_0000240104" description="NADH-quinone oxidoreductase subunit H 2">
    <location>
        <begin position="1"/>
        <end position="340"/>
    </location>
</feature>
<feature type="transmembrane region" description="Helical" evidence="1">
    <location>
        <begin position="10"/>
        <end position="30"/>
    </location>
</feature>
<feature type="transmembrane region" description="Helical" evidence="1">
    <location>
        <begin position="84"/>
        <end position="104"/>
    </location>
</feature>
<feature type="transmembrane region" description="Helical" evidence="1">
    <location>
        <begin position="126"/>
        <end position="146"/>
    </location>
</feature>
<feature type="transmembrane region" description="Helical" evidence="1">
    <location>
        <begin position="172"/>
        <end position="192"/>
    </location>
</feature>
<feature type="transmembrane region" description="Helical" evidence="1">
    <location>
        <begin position="198"/>
        <end position="218"/>
    </location>
</feature>
<feature type="transmembrane region" description="Helical" evidence="1">
    <location>
        <begin position="255"/>
        <end position="275"/>
    </location>
</feature>
<feature type="transmembrane region" description="Helical" evidence="1">
    <location>
        <begin position="279"/>
        <end position="299"/>
    </location>
</feature>
<feature type="transmembrane region" description="Helical" evidence="1">
    <location>
        <begin position="318"/>
        <end position="338"/>
    </location>
</feature>
<dbReference type="EC" id="7.1.1.-" evidence="1"/>
<dbReference type="EMBL" id="CP000133">
    <property type="protein sequence ID" value="ABC92500.1"/>
    <property type="molecule type" value="Genomic_DNA"/>
</dbReference>
<dbReference type="SMR" id="Q2K3T6"/>
<dbReference type="KEGG" id="ret:RHE_CH03745"/>
<dbReference type="eggNOG" id="COG1005">
    <property type="taxonomic scope" value="Bacteria"/>
</dbReference>
<dbReference type="HOGENOM" id="CLU_015134_0_1_5"/>
<dbReference type="Proteomes" id="UP000001936">
    <property type="component" value="Chromosome"/>
</dbReference>
<dbReference type="GO" id="GO:0005886">
    <property type="term" value="C:plasma membrane"/>
    <property type="evidence" value="ECO:0007669"/>
    <property type="project" value="UniProtKB-SubCell"/>
</dbReference>
<dbReference type="GO" id="GO:0003954">
    <property type="term" value="F:NADH dehydrogenase activity"/>
    <property type="evidence" value="ECO:0007669"/>
    <property type="project" value="TreeGrafter"/>
</dbReference>
<dbReference type="GO" id="GO:0016655">
    <property type="term" value="F:oxidoreductase activity, acting on NAD(P)H, quinone or similar compound as acceptor"/>
    <property type="evidence" value="ECO:0007669"/>
    <property type="project" value="UniProtKB-UniRule"/>
</dbReference>
<dbReference type="GO" id="GO:0048038">
    <property type="term" value="F:quinone binding"/>
    <property type="evidence" value="ECO:0007669"/>
    <property type="project" value="UniProtKB-KW"/>
</dbReference>
<dbReference type="GO" id="GO:0009060">
    <property type="term" value="P:aerobic respiration"/>
    <property type="evidence" value="ECO:0007669"/>
    <property type="project" value="TreeGrafter"/>
</dbReference>
<dbReference type="HAMAP" id="MF_01350">
    <property type="entry name" value="NDH1_NuoH"/>
    <property type="match status" value="1"/>
</dbReference>
<dbReference type="InterPro" id="IPR001694">
    <property type="entry name" value="NADH_UbQ_OxRdtase_su1/FPO"/>
</dbReference>
<dbReference type="InterPro" id="IPR018086">
    <property type="entry name" value="NADH_UbQ_OxRdtase_su1_CS"/>
</dbReference>
<dbReference type="NCBIfam" id="NF004741">
    <property type="entry name" value="PRK06076.1-2"/>
    <property type="match status" value="1"/>
</dbReference>
<dbReference type="PANTHER" id="PTHR11432">
    <property type="entry name" value="NADH DEHYDROGENASE SUBUNIT 1"/>
    <property type="match status" value="1"/>
</dbReference>
<dbReference type="PANTHER" id="PTHR11432:SF3">
    <property type="entry name" value="NADH-UBIQUINONE OXIDOREDUCTASE CHAIN 1"/>
    <property type="match status" value="1"/>
</dbReference>
<dbReference type="Pfam" id="PF00146">
    <property type="entry name" value="NADHdh"/>
    <property type="match status" value="1"/>
</dbReference>
<dbReference type="PROSITE" id="PS00667">
    <property type="entry name" value="COMPLEX1_ND1_1"/>
    <property type="match status" value="1"/>
</dbReference>
<reference key="1">
    <citation type="journal article" date="2006" name="Proc. Natl. Acad. Sci. U.S.A.">
        <title>The partitioned Rhizobium etli genome: genetic and metabolic redundancy in seven interacting replicons.</title>
        <authorList>
            <person name="Gonzalez V."/>
            <person name="Santamaria R.I."/>
            <person name="Bustos P."/>
            <person name="Hernandez-Gonzalez I."/>
            <person name="Medrano-Soto A."/>
            <person name="Moreno-Hagelsieb G."/>
            <person name="Janga S.C."/>
            <person name="Ramirez M.A."/>
            <person name="Jimenez-Jacinto V."/>
            <person name="Collado-Vides J."/>
            <person name="Davila G."/>
        </authorList>
    </citation>
    <scope>NUCLEOTIDE SEQUENCE [LARGE SCALE GENOMIC DNA]</scope>
    <source>
        <strain>ATCC 51251 / DSM 11541 / JCM 21823 / NBRC 15573 / CFN 42</strain>
    </source>
</reference>
<keyword id="KW-0997">Cell inner membrane</keyword>
<keyword id="KW-1003">Cell membrane</keyword>
<keyword id="KW-0472">Membrane</keyword>
<keyword id="KW-0520">NAD</keyword>
<keyword id="KW-0874">Quinone</keyword>
<keyword id="KW-1185">Reference proteome</keyword>
<keyword id="KW-1278">Translocase</keyword>
<keyword id="KW-0812">Transmembrane</keyword>
<keyword id="KW-1133">Transmembrane helix</keyword>
<keyword id="KW-0830">Ubiquinone</keyword>
<proteinExistence type="inferred from homology"/>
<name>NUOH2_RHIEC</name>
<accession>Q2K3T6</accession>
<comment type="function">
    <text evidence="1">NDH-1 shuttles electrons from NADH, via FMN and iron-sulfur (Fe-S) centers, to quinones in the respiratory chain. The immediate electron acceptor for the enzyme in this species is believed to be ubiquinone. Couples the redox reaction to proton translocation (for every two electrons transferred, four hydrogen ions are translocated across the cytoplasmic membrane), and thus conserves the redox energy in a proton gradient. This subunit may bind ubiquinone.</text>
</comment>
<comment type="catalytic activity">
    <reaction evidence="1">
        <text>a quinone + NADH + 5 H(+)(in) = a quinol + NAD(+) + 4 H(+)(out)</text>
        <dbReference type="Rhea" id="RHEA:57888"/>
        <dbReference type="ChEBI" id="CHEBI:15378"/>
        <dbReference type="ChEBI" id="CHEBI:24646"/>
        <dbReference type="ChEBI" id="CHEBI:57540"/>
        <dbReference type="ChEBI" id="CHEBI:57945"/>
        <dbReference type="ChEBI" id="CHEBI:132124"/>
    </reaction>
</comment>
<comment type="subunit">
    <text evidence="1">NDH-1 is composed of 14 different subunits. Subunits NuoA, H, J, K, L, M, N constitute the membrane sector of the complex.</text>
</comment>
<comment type="subcellular location">
    <subcellularLocation>
        <location evidence="1">Cell inner membrane</location>
        <topology evidence="1">Multi-pass membrane protein</topology>
    </subcellularLocation>
</comment>
<comment type="similarity">
    <text evidence="1">Belongs to the complex I subunit 1 family.</text>
</comment>